<evidence type="ECO:0000250" key="1">
    <source>
        <dbReference type="UniProtKB" id="P51843"/>
    </source>
</evidence>
<evidence type="ECO:0000250" key="2">
    <source>
        <dbReference type="UniProtKB" id="Q61066"/>
    </source>
</evidence>
<evidence type="ECO:0000255" key="3">
    <source>
        <dbReference type="PROSITE-ProRule" id="PRU01189"/>
    </source>
</evidence>
<evidence type="ECO:0000305" key="4"/>
<name>NR0B1_CALJA</name>
<reference key="1">
    <citation type="journal article" date="2001" name="Am. J. Hum. Genet.">
        <title>Primate DAX1, SRY, and SOX9: evolutionary stratification of sex-determination pathway.</title>
        <authorList>
            <person name="Patel M."/>
            <person name="Dorman K.S."/>
            <person name="Zhang Y.-H."/>
            <person name="Huang B.-L."/>
            <person name="Arnold A.P."/>
            <person name="Sinsheimer J.S."/>
            <person name="Vilain E."/>
            <person name="McCabe E.R.B."/>
        </authorList>
    </citation>
    <scope>NUCLEOTIDE SEQUENCE [MRNA]</scope>
</reference>
<comment type="function">
    <text evidence="1 2">Nuclear receptor that lacks a DNA-binding domain and acts as a corepressor that inhibits the transcriptional activity of other nuclear receptors through heterodimeric interactions. Component of a cascade required for the development of the hypothalamic-pituitary-adrenal-gonadal axis (By similarity). May also have a role in the development of the embryo and in the maintenance of embryonic stem cell pluripotency (By similarity).</text>
</comment>
<comment type="subunit">
    <text evidence="1 2">Homodimer. Interacts with NR5A1, NR5A2, NR0B2 and with COPS2 (By similarity). Interacts with ESRRB; represses ESRRB activity at the GATA6 promoter (By similarity).</text>
</comment>
<comment type="subcellular location">
    <subcellularLocation>
        <location evidence="1">Nucleus</location>
    </subcellularLocation>
    <subcellularLocation>
        <location evidence="1">Cytoplasm</location>
    </subcellularLocation>
    <text evidence="1">Shuttles between the cytoplasm and nucleus. Homodimers exits in the cytoplasm and in the nucleus.</text>
</comment>
<comment type="domain">
    <text evidence="1">Homodimerization involved an interaction between amino and carboxy termini involving LXXLL motifs and steroid binding domain (AF-2 motif). Heterodimerizes with NR5A1 and NROB2 through its N-terminal LXXLL motifs.</text>
</comment>
<comment type="similarity">
    <text evidence="4">Belongs to the nuclear hormone receptor family. NR0 subfamily.</text>
</comment>
<accession>Q9BG94</accession>
<organism>
    <name type="scientific">Callithrix jacchus</name>
    <name type="common">White-tufted-ear marmoset</name>
    <dbReference type="NCBI Taxonomy" id="9483"/>
    <lineage>
        <taxon>Eukaryota</taxon>
        <taxon>Metazoa</taxon>
        <taxon>Chordata</taxon>
        <taxon>Craniata</taxon>
        <taxon>Vertebrata</taxon>
        <taxon>Euteleostomi</taxon>
        <taxon>Mammalia</taxon>
        <taxon>Eutheria</taxon>
        <taxon>Euarchontoglires</taxon>
        <taxon>Primates</taxon>
        <taxon>Haplorrhini</taxon>
        <taxon>Platyrrhini</taxon>
        <taxon>Cebidae</taxon>
        <taxon>Callitrichinae</taxon>
        <taxon>Callithrix</taxon>
        <taxon>Callithrix</taxon>
    </lineage>
</organism>
<protein>
    <recommendedName>
        <fullName>Nuclear receptor subfamily 0 group B member 1</fullName>
    </recommendedName>
    <alternativeName>
        <fullName>Nuclear receptor DAX-1</fullName>
    </alternativeName>
</protein>
<gene>
    <name type="primary">NR0B1</name>
    <name type="synonym">DAX1</name>
</gene>
<proteinExistence type="evidence at transcript level"/>
<dbReference type="EMBL" id="AF322895">
    <property type="protein sequence ID" value="AAK01646.1"/>
    <property type="molecule type" value="mRNA"/>
</dbReference>
<dbReference type="SMR" id="Q9BG94"/>
<dbReference type="FunCoup" id="Q9BG94">
    <property type="interactions" value="175"/>
</dbReference>
<dbReference type="STRING" id="9483.ENSCJAP00000062558"/>
<dbReference type="eggNOG" id="KOG3575">
    <property type="taxonomic scope" value="Eukaryota"/>
</dbReference>
<dbReference type="InParanoid" id="Q9BG94"/>
<dbReference type="Proteomes" id="UP000008225">
    <property type="component" value="Unplaced"/>
</dbReference>
<dbReference type="GO" id="GO:0005737">
    <property type="term" value="C:cytoplasm"/>
    <property type="evidence" value="ECO:0000250"/>
    <property type="project" value="UniProtKB"/>
</dbReference>
<dbReference type="GO" id="GO:0016020">
    <property type="term" value="C:membrane"/>
    <property type="evidence" value="ECO:0000250"/>
    <property type="project" value="UniProtKB"/>
</dbReference>
<dbReference type="GO" id="GO:0005654">
    <property type="term" value="C:nucleoplasm"/>
    <property type="evidence" value="ECO:0007669"/>
    <property type="project" value="UniProtKB-ARBA"/>
</dbReference>
<dbReference type="GO" id="GO:0005634">
    <property type="term" value="C:nucleus"/>
    <property type="evidence" value="ECO:0000250"/>
    <property type="project" value="UniProtKB"/>
</dbReference>
<dbReference type="GO" id="GO:0005840">
    <property type="term" value="C:ribosome"/>
    <property type="evidence" value="ECO:0000250"/>
    <property type="project" value="UniProtKB"/>
</dbReference>
<dbReference type="GO" id="GO:0032448">
    <property type="term" value="F:DNA hairpin binding"/>
    <property type="evidence" value="ECO:0000250"/>
    <property type="project" value="UniProtKB"/>
</dbReference>
<dbReference type="GO" id="GO:0016922">
    <property type="term" value="F:nuclear receptor binding"/>
    <property type="evidence" value="ECO:0000250"/>
    <property type="project" value="UniProtKB"/>
</dbReference>
<dbReference type="GO" id="GO:0019904">
    <property type="term" value="F:protein domain specific binding"/>
    <property type="evidence" value="ECO:0000250"/>
    <property type="project" value="UniProtKB"/>
</dbReference>
<dbReference type="GO" id="GO:0042803">
    <property type="term" value="F:protein homodimerization activity"/>
    <property type="evidence" value="ECO:0000250"/>
    <property type="project" value="UniProtKB"/>
</dbReference>
<dbReference type="GO" id="GO:0003723">
    <property type="term" value="F:RNA binding"/>
    <property type="evidence" value="ECO:0000250"/>
    <property type="project" value="UniProtKB"/>
</dbReference>
<dbReference type="GO" id="GO:0003714">
    <property type="term" value="F:transcription corepressor activity"/>
    <property type="evidence" value="ECO:0007669"/>
    <property type="project" value="TreeGrafter"/>
</dbReference>
<dbReference type="GO" id="GO:0030325">
    <property type="term" value="P:adrenal gland development"/>
    <property type="evidence" value="ECO:0000250"/>
    <property type="project" value="UniProtKB"/>
</dbReference>
<dbReference type="GO" id="GO:0008406">
    <property type="term" value="P:gonad development"/>
    <property type="evidence" value="ECO:0000250"/>
    <property type="project" value="UniProtKB"/>
</dbReference>
<dbReference type="GO" id="GO:0008584">
    <property type="term" value="P:male gonad development"/>
    <property type="evidence" value="ECO:0000250"/>
    <property type="project" value="UniProtKB"/>
</dbReference>
<dbReference type="GO" id="GO:0045892">
    <property type="term" value="P:negative regulation of DNA-templated transcription"/>
    <property type="evidence" value="ECO:0000250"/>
    <property type="project" value="UniProtKB"/>
</dbReference>
<dbReference type="GO" id="GO:0033144">
    <property type="term" value="P:negative regulation of intracellular steroid hormone receptor signaling pathway"/>
    <property type="evidence" value="ECO:0000250"/>
    <property type="project" value="UniProtKB"/>
</dbReference>
<dbReference type="GO" id="GO:0010894">
    <property type="term" value="P:negative regulation of steroid biosynthetic process"/>
    <property type="evidence" value="ECO:0000250"/>
    <property type="project" value="HGNC-UCL"/>
</dbReference>
<dbReference type="GO" id="GO:0000122">
    <property type="term" value="P:negative regulation of transcription by RNA polymerase II"/>
    <property type="evidence" value="ECO:0007669"/>
    <property type="project" value="TreeGrafter"/>
</dbReference>
<dbReference type="GO" id="GO:0008104">
    <property type="term" value="P:protein localization"/>
    <property type="evidence" value="ECO:0000250"/>
    <property type="project" value="UniProtKB"/>
</dbReference>
<dbReference type="GO" id="GO:0007283">
    <property type="term" value="P:spermatogenesis"/>
    <property type="evidence" value="ECO:0007669"/>
    <property type="project" value="TreeGrafter"/>
</dbReference>
<dbReference type="CDD" id="cd07350">
    <property type="entry name" value="NR_LBD_Dax1"/>
    <property type="match status" value="1"/>
</dbReference>
<dbReference type="FunFam" id="1.10.565.10:FF:000027">
    <property type="entry name" value="nuclear receptor subfamily 0 group B member 1"/>
    <property type="match status" value="1"/>
</dbReference>
<dbReference type="Gene3D" id="1.10.565.10">
    <property type="entry name" value="Retinoid X Receptor"/>
    <property type="match status" value="1"/>
</dbReference>
<dbReference type="InterPro" id="IPR035500">
    <property type="entry name" value="NHR-like_dom_sf"/>
</dbReference>
<dbReference type="InterPro" id="IPR033544">
    <property type="entry name" value="NR0B1/2"/>
</dbReference>
<dbReference type="InterPro" id="IPR000536">
    <property type="entry name" value="Nucl_hrmn_rcpt_lig-bd"/>
</dbReference>
<dbReference type="InterPro" id="IPR001723">
    <property type="entry name" value="Nuclear_hrmn_rcpt"/>
</dbReference>
<dbReference type="InterPro" id="IPR025900">
    <property type="entry name" value="Nuclear_receptor_repeat"/>
</dbReference>
<dbReference type="PANTHER" id="PTHR24081">
    <property type="entry name" value="NUCLEAR RECEPTOR SUBFAMILY 0 GROUP B"/>
    <property type="match status" value="1"/>
</dbReference>
<dbReference type="PANTHER" id="PTHR24081:SF1">
    <property type="entry name" value="NUCLEAR RECEPTOR SUBFAMILY 0 GROUP B MEMBER 1"/>
    <property type="match status" value="1"/>
</dbReference>
<dbReference type="Pfam" id="PF00104">
    <property type="entry name" value="Hormone_recep"/>
    <property type="match status" value="1"/>
</dbReference>
<dbReference type="Pfam" id="PF14046">
    <property type="entry name" value="NR_Repeat"/>
    <property type="match status" value="4"/>
</dbReference>
<dbReference type="PRINTS" id="PR00398">
    <property type="entry name" value="STRDHORMONER"/>
</dbReference>
<dbReference type="SMART" id="SM00430">
    <property type="entry name" value="HOLI"/>
    <property type="match status" value="1"/>
</dbReference>
<dbReference type="SUPFAM" id="SSF48508">
    <property type="entry name" value="Nuclear receptor ligand-binding domain"/>
    <property type="match status" value="1"/>
</dbReference>
<dbReference type="PROSITE" id="PS51843">
    <property type="entry name" value="NR_LBD"/>
    <property type="match status" value="1"/>
</dbReference>
<feature type="chain" id="PRO_0000280115" description="Nuclear receptor subfamily 0 group B member 1">
    <location>
        <begin position="1"/>
        <end position="470"/>
    </location>
</feature>
<feature type="repeat" description="1">
    <location>
        <begin position="1"/>
        <end position="67"/>
    </location>
</feature>
<feature type="repeat" description="2">
    <location>
        <begin position="68"/>
        <end position="133"/>
    </location>
</feature>
<feature type="repeat" description="3">
    <location>
        <begin position="134"/>
        <end position="200"/>
    </location>
</feature>
<feature type="repeat" description="4; truncated">
    <location>
        <begin position="201"/>
        <end position="253"/>
    </location>
</feature>
<feature type="domain" description="NR LBD" evidence="3">
    <location>
        <begin position="205"/>
        <end position="469"/>
    </location>
</feature>
<feature type="region of interest" description="4 X 67 AA tandem repeats">
    <location>
        <begin position="1"/>
        <end position="253"/>
    </location>
</feature>
<feature type="short sequence motif" description="LXXLL motif 1">
    <location>
        <begin position="13"/>
        <end position="17"/>
    </location>
</feature>
<feature type="short sequence motif" description="LXXLL motif 2">
    <location>
        <begin position="80"/>
        <end position="84"/>
    </location>
</feature>
<feature type="short sequence motif" description="LXXLL motif 3">
    <location>
        <begin position="146"/>
        <end position="150"/>
    </location>
</feature>
<feature type="short sequence motif" description="AF-2 motif">
    <location>
        <begin position="461"/>
        <end position="466"/>
    </location>
</feature>
<sequence>MAGEDHQWQGSILYNMLMSAKQRHAAPEAPEARLGDQCWGCSCGDEPGVGREGLLGGRNVALLYRCCFCGKDHPRQGSILYSMLTSAKQTYAAPKAPEARLGPCWGCSCGSDPGVGREGLPGGRPVALLYRCCFCGEDHPRQGSILYSLLTSAKQTHVAPAAPEARPGGAWWDRSYFAQRPGGKEGLPGRRAMALLYRCCFCGEDQPQQGSTLYSMPTSTNQTPAAPEERPGAPWWDTSCGALRPVALKNPQVVCEAASAGLLKTLRFVKYLPCFQVLPLDQQLVLVRNCWAPLLMLELAQDHLQFETVEVSEPSMLQKILTTRRRETGGTEPLPVPTLQPHLAPPAEARKVPSASQVQAIKCFLSKCWSLNISTKEYAYLKGTVLFNPDVPGLQCVKYIQGLQWGTQQILSEHIRMTHRGHHDRFIELNSALFLLRFINANVIAELFFRPIIGTVSMDDMMLEMLCTKL</sequence>
<keyword id="KW-0963">Cytoplasm</keyword>
<keyword id="KW-0539">Nucleus</keyword>
<keyword id="KW-0675">Receptor</keyword>
<keyword id="KW-1185">Reference proteome</keyword>
<keyword id="KW-0677">Repeat</keyword>
<keyword id="KW-0678">Repressor</keyword>
<keyword id="KW-0804">Transcription</keyword>
<keyword id="KW-0805">Transcription regulation</keyword>